<feature type="chain" id="PRO_0000070831" description="Chaperone protein DnaJ 2">
    <location>
        <begin position="1"/>
        <end position="392"/>
    </location>
</feature>
<feature type="domain" description="J" evidence="1">
    <location>
        <begin position="10"/>
        <end position="75"/>
    </location>
</feature>
<feature type="repeat" description="CXXCXGXG motif">
    <location>
        <begin position="174"/>
        <end position="181"/>
    </location>
</feature>
<feature type="repeat" description="CXXCXGXG motif">
    <location>
        <begin position="191"/>
        <end position="198"/>
    </location>
</feature>
<feature type="repeat" description="CXXCXGXG motif">
    <location>
        <begin position="213"/>
        <end position="220"/>
    </location>
</feature>
<feature type="repeat" description="CXXCXGXG motif">
    <location>
        <begin position="227"/>
        <end position="234"/>
    </location>
</feature>
<feature type="zinc finger region" description="CR-type" evidence="1">
    <location>
        <begin position="161"/>
        <end position="239"/>
    </location>
</feature>
<feature type="binding site" evidence="1">
    <location>
        <position position="174"/>
    </location>
    <ligand>
        <name>Zn(2+)</name>
        <dbReference type="ChEBI" id="CHEBI:29105"/>
        <label>1</label>
    </ligand>
</feature>
<feature type="binding site" evidence="1">
    <location>
        <position position="177"/>
    </location>
    <ligand>
        <name>Zn(2+)</name>
        <dbReference type="ChEBI" id="CHEBI:29105"/>
        <label>1</label>
    </ligand>
</feature>
<feature type="binding site" evidence="1">
    <location>
        <position position="191"/>
    </location>
    <ligand>
        <name>Zn(2+)</name>
        <dbReference type="ChEBI" id="CHEBI:29105"/>
        <label>2</label>
    </ligand>
</feature>
<feature type="binding site" evidence="1">
    <location>
        <position position="194"/>
    </location>
    <ligand>
        <name>Zn(2+)</name>
        <dbReference type="ChEBI" id="CHEBI:29105"/>
        <label>2</label>
    </ligand>
</feature>
<feature type="binding site" evidence="1">
    <location>
        <position position="213"/>
    </location>
    <ligand>
        <name>Zn(2+)</name>
        <dbReference type="ChEBI" id="CHEBI:29105"/>
        <label>2</label>
    </ligand>
</feature>
<feature type="binding site" evidence="1">
    <location>
        <position position="216"/>
    </location>
    <ligand>
        <name>Zn(2+)</name>
        <dbReference type="ChEBI" id="CHEBI:29105"/>
        <label>2</label>
    </ligand>
</feature>
<feature type="binding site" evidence="1">
    <location>
        <position position="227"/>
    </location>
    <ligand>
        <name>Zn(2+)</name>
        <dbReference type="ChEBI" id="CHEBI:29105"/>
        <label>1</label>
    </ligand>
</feature>
<feature type="binding site" evidence="1">
    <location>
        <position position="230"/>
    </location>
    <ligand>
        <name>Zn(2+)</name>
        <dbReference type="ChEBI" id="CHEBI:29105"/>
        <label>1</label>
    </ligand>
</feature>
<comment type="function">
    <text evidence="1">Participates actively in the response to hyperosmotic and heat shock by preventing the aggregation of stress-denatured proteins and by disaggregating proteins, also in an autonomous, DnaK-independent fashion. Unfolded proteins bind initially to DnaJ; upon interaction with the DnaJ-bound protein, DnaK hydrolyzes its bound ATP, resulting in the formation of a stable complex. GrpE releases ADP from DnaK; ATP binding to DnaK triggers the release of the substrate protein, thus completing the reaction cycle. Several rounds of ATP-dependent interactions between DnaJ, DnaK and GrpE are required for fully efficient folding. Also involved, together with DnaK and GrpE, in the DNA replication of plasmids through activation of initiation proteins.</text>
</comment>
<comment type="cofactor">
    <cofactor evidence="1">
        <name>Zn(2+)</name>
        <dbReference type="ChEBI" id="CHEBI:29105"/>
    </cofactor>
    <text evidence="1">Binds 2 Zn(2+) ions per monomer.</text>
</comment>
<comment type="subunit">
    <text evidence="1">Homodimer.</text>
</comment>
<comment type="subcellular location">
    <subcellularLocation>
        <location evidence="1">Cytoplasm</location>
    </subcellularLocation>
</comment>
<comment type="domain">
    <text evidence="1">The J domain is necessary and sufficient to stimulate DnaK ATPase activity. Zinc center 1 plays an important role in the autonomous, DnaK-independent chaperone activity of DnaJ. Zinc center 2 is essential for interaction with DnaK and for DnaJ activity.</text>
</comment>
<comment type="similarity">
    <text evidence="1">Belongs to the DnaJ family.</text>
</comment>
<gene>
    <name evidence="1" type="primary">dnaJ2</name>
    <name type="ordered locus">MAP_3842</name>
</gene>
<evidence type="ECO:0000255" key="1">
    <source>
        <dbReference type="HAMAP-Rule" id="MF_01152"/>
    </source>
</evidence>
<accession>Q73T77</accession>
<proteinExistence type="inferred from homology"/>
<protein>
    <recommendedName>
        <fullName evidence="1">Chaperone protein DnaJ 2</fullName>
    </recommendedName>
</protein>
<name>DNAJ2_MYCPA</name>
<dbReference type="EMBL" id="AE016958">
    <property type="protein sequence ID" value="AAS06392.1"/>
    <property type="molecule type" value="Genomic_DNA"/>
</dbReference>
<dbReference type="SMR" id="Q73T77"/>
<dbReference type="STRING" id="262316.MAP_3842"/>
<dbReference type="KEGG" id="mpa:MAP_3842"/>
<dbReference type="eggNOG" id="COG0484">
    <property type="taxonomic scope" value="Bacteria"/>
</dbReference>
<dbReference type="HOGENOM" id="CLU_017633_0_6_11"/>
<dbReference type="Proteomes" id="UP000000580">
    <property type="component" value="Chromosome"/>
</dbReference>
<dbReference type="GO" id="GO:0005737">
    <property type="term" value="C:cytoplasm"/>
    <property type="evidence" value="ECO:0007669"/>
    <property type="project" value="UniProtKB-SubCell"/>
</dbReference>
<dbReference type="GO" id="GO:0005524">
    <property type="term" value="F:ATP binding"/>
    <property type="evidence" value="ECO:0007669"/>
    <property type="project" value="InterPro"/>
</dbReference>
<dbReference type="GO" id="GO:0031072">
    <property type="term" value="F:heat shock protein binding"/>
    <property type="evidence" value="ECO:0007669"/>
    <property type="project" value="InterPro"/>
</dbReference>
<dbReference type="GO" id="GO:0051082">
    <property type="term" value="F:unfolded protein binding"/>
    <property type="evidence" value="ECO:0007669"/>
    <property type="project" value="UniProtKB-UniRule"/>
</dbReference>
<dbReference type="GO" id="GO:0008270">
    <property type="term" value="F:zinc ion binding"/>
    <property type="evidence" value="ECO:0007669"/>
    <property type="project" value="UniProtKB-UniRule"/>
</dbReference>
<dbReference type="GO" id="GO:0051085">
    <property type="term" value="P:chaperone cofactor-dependent protein refolding"/>
    <property type="evidence" value="ECO:0007669"/>
    <property type="project" value="TreeGrafter"/>
</dbReference>
<dbReference type="GO" id="GO:0006260">
    <property type="term" value="P:DNA replication"/>
    <property type="evidence" value="ECO:0007669"/>
    <property type="project" value="UniProtKB-KW"/>
</dbReference>
<dbReference type="GO" id="GO:0042026">
    <property type="term" value="P:protein refolding"/>
    <property type="evidence" value="ECO:0007669"/>
    <property type="project" value="TreeGrafter"/>
</dbReference>
<dbReference type="GO" id="GO:0009408">
    <property type="term" value="P:response to heat"/>
    <property type="evidence" value="ECO:0007669"/>
    <property type="project" value="InterPro"/>
</dbReference>
<dbReference type="CDD" id="cd06257">
    <property type="entry name" value="DnaJ"/>
    <property type="match status" value="1"/>
</dbReference>
<dbReference type="CDD" id="cd10747">
    <property type="entry name" value="DnaJ_C"/>
    <property type="match status" value="1"/>
</dbReference>
<dbReference type="CDD" id="cd10719">
    <property type="entry name" value="DnaJ_zf"/>
    <property type="match status" value="1"/>
</dbReference>
<dbReference type="FunFam" id="2.60.260.20:FF:000021">
    <property type="entry name" value="Chaperone protein DnaJ"/>
    <property type="match status" value="1"/>
</dbReference>
<dbReference type="FunFam" id="2.10.230.10:FF:000002">
    <property type="entry name" value="Molecular chaperone DnaJ"/>
    <property type="match status" value="1"/>
</dbReference>
<dbReference type="Gene3D" id="1.10.287.110">
    <property type="entry name" value="DnaJ domain"/>
    <property type="match status" value="1"/>
</dbReference>
<dbReference type="Gene3D" id="2.10.230.10">
    <property type="entry name" value="Heat shock protein DnaJ, cysteine-rich domain"/>
    <property type="match status" value="1"/>
</dbReference>
<dbReference type="Gene3D" id="2.60.260.20">
    <property type="entry name" value="Urease metallochaperone UreE, N-terminal domain"/>
    <property type="match status" value="2"/>
</dbReference>
<dbReference type="HAMAP" id="MF_01152">
    <property type="entry name" value="DnaJ"/>
    <property type="match status" value="1"/>
</dbReference>
<dbReference type="InterPro" id="IPR012724">
    <property type="entry name" value="DnaJ"/>
</dbReference>
<dbReference type="InterPro" id="IPR002939">
    <property type="entry name" value="DnaJ_C"/>
</dbReference>
<dbReference type="InterPro" id="IPR001623">
    <property type="entry name" value="DnaJ_domain"/>
</dbReference>
<dbReference type="InterPro" id="IPR018253">
    <property type="entry name" value="DnaJ_domain_CS"/>
</dbReference>
<dbReference type="InterPro" id="IPR008971">
    <property type="entry name" value="HSP40/DnaJ_pept-bd"/>
</dbReference>
<dbReference type="InterPro" id="IPR001305">
    <property type="entry name" value="HSP_DnaJ_Cys-rich_dom"/>
</dbReference>
<dbReference type="InterPro" id="IPR036410">
    <property type="entry name" value="HSP_DnaJ_Cys-rich_dom_sf"/>
</dbReference>
<dbReference type="InterPro" id="IPR036869">
    <property type="entry name" value="J_dom_sf"/>
</dbReference>
<dbReference type="NCBIfam" id="TIGR02349">
    <property type="entry name" value="DnaJ_bact"/>
    <property type="match status" value="1"/>
</dbReference>
<dbReference type="NCBIfam" id="NF008035">
    <property type="entry name" value="PRK10767.1"/>
    <property type="match status" value="1"/>
</dbReference>
<dbReference type="NCBIfam" id="NF010872">
    <property type="entry name" value="PRK14279.1"/>
    <property type="match status" value="1"/>
</dbReference>
<dbReference type="PANTHER" id="PTHR43096:SF54">
    <property type="entry name" value="CHAPERONE PROTEIN DNAJ 1"/>
    <property type="match status" value="1"/>
</dbReference>
<dbReference type="PANTHER" id="PTHR43096">
    <property type="entry name" value="DNAJ HOMOLOG 1, MITOCHONDRIAL-RELATED"/>
    <property type="match status" value="1"/>
</dbReference>
<dbReference type="Pfam" id="PF00226">
    <property type="entry name" value="DnaJ"/>
    <property type="match status" value="1"/>
</dbReference>
<dbReference type="Pfam" id="PF01556">
    <property type="entry name" value="DnaJ_C"/>
    <property type="match status" value="1"/>
</dbReference>
<dbReference type="Pfam" id="PF00684">
    <property type="entry name" value="DnaJ_CXXCXGXG"/>
    <property type="match status" value="1"/>
</dbReference>
<dbReference type="PRINTS" id="PR00625">
    <property type="entry name" value="JDOMAIN"/>
</dbReference>
<dbReference type="SMART" id="SM00271">
    <property type="entry name" value="DnaJ"/>
    <property type="match status" value="1"/>
</dbReference>
<dbReference type="SUPFAM" id="SSF46565">
    <property type="entry name" value="Chaperone J-domain"/>
    <property type="match status" value="1"/>
</dbReference>
<dbReference type="SUPFAM" id="SSF57938">
    <property type="entry name" value="DnaJ/Hsp40 cysteine-rich domain"/>
    <property type="match status" value="1"/>
</dbReference>
<dbReference type="SUPFAM" id="SSF49493">
    <property type="entry name" value="HSP40/DnaJ peptide-binding domain"/>
    <property type="match status" value="2"/>
</dbReference>
<dbReference type="PROSITE" id="PS00636">
    <property type="entry name" value="DNAJ_1"/>
    <property type="match status" value="1"/>
</dbReference>
<dbReference type="PROSITE" id="PS50076">
    <property type="entry name" value="DNAJ_2"/>
    <property type="match status" value="1"/>
</dbReference>
<dbReference type="PROSITE" id="PS51188">
    <property type="entry name" value="ZF_CR"/>
    <property type="match status" value="1"/>
</dbReference>
<keyword id="KW-0143">Chaperone</keyword>
<keyword id="KW-0963">Cytoplasm</keyword>
<keyword id="KW-0235">DNA replication</keyword>
<keyword id="KW-0479">Metal-binding</keyword>
<keyword id="KW-1185">Reference proteome</keyword>
<keyword id="KW-0677">Repeat</keyword>
<keyword id="KW-0346">Stress response</keyword>
<keyword id="KW-0862">Zinc</keyword>
<keyword id="KW-0863">Zinc-finger</keyword>
<reference key="1">
    <citation type="journal article" date="2005" name="Proc. Natl. Acad. Sci. U.S.A.">
        <title>The complete genome sequence of Mycobacterium avium subspecies paratuberculosis.</title>
        <authorList>
            <person name="Li L."/>
            <person name="Bannantine J.P."/>
            <person name="Zhang Q."/>
            <person name="Amonsin A."/>
            <person name="May B.J."/>
            <person name="Alt D."/>
            <person name="Banerji N."/>
            <person name="Kanjilal S."/>
            <person name="Kapur V."/>
        </authorList>
    </citation>
    <scope>NUCLEOTIDE SEQUENCE [LARGE SCALE GENOMIC DNA]</scope>
    <source>
        <strain>ATCC BAA-968 / K-10</strain>
    </source>
</reference>
<sequence length="392" mass="41280">MAQREWVEKDFYKELGVSSDASPEEIKRAYRKLARDLHPDANPDNPAAGERFKAVSEAHNVLSDPAKRKEYDETRRLFAGGGFGGRRFDTGGFGGFNVGGDGAEFNLNDLFDAAGRSGGTNIGDLFGGLFGRASGGRPSRPRRGNDLETETQLDFVEAAKGVAMPLRLTSPAPCTNCHGSGARPGTSPKVCPTCNGSGVISRNQGAFGFSEPCTDCRGSGSIIEHPCDECKGTGVTTRTRTINVRIPPGVEDGQRIRLPGQGEAGLRGAPSGDLYVTVHVRPHKVFGRDGDDLTVTVPVSFTELALGSTISVPTLDGKVGVRVPKGTADGRILRVRGRGVPKRSGGHGDLLVTVKVAVPPNLDGAAQEALEAYAAAERASGFDPRAGWAGNR</sequence>
<organism>
    <name type="scientific">Mycolicibacterium paratuberculosis (strain ATCC BAA-968 / K-10)</name>
    <name type="common">Mycobacterium paratuberculosis</name>
    <dbReference type="NCBI Taxonomy" id="262316"/>
    <lineage>
        <taxon>Bacteria</taxon>
        <taxon>Bacillati</taxon>
        <taxon>Actinomycetota</taxon>
        <taxon>Actinomycetes</taxon>
        <taxon>Mycobacteriales</taxon>
        <taxon>Mycobacteriaceae</taxon>
        <taxon>Mycobacterium</taxon>
        <taxon>Mycobacterium avium complex (MAC)</taxon>
    </lineage>
</organism>